<dbReference type="EC" id="1.1.5.3"/>
<dbReference type="EMBL" id="M20938">
    <property type="protein sequence ID" value="AAA83864.1"/>
    <property type="molecule type" value="Genomic_DNA"/>
</dbReference>
<dbReference type="EMBL" id="U00096">
    <property type="protein sequence ID" value="AAC75301.1"/>
    <property type="molecule type" value="Genomic_DNA"/>
</dbReference>
<dbReference type="EMBL" id="AP009048">
    <property type="protein sequence ID" value="BAA16060.1"/>
    <property type="molecule type" value="Genomic_DNA"/>
</dbReference>
<dbReference type="PIR" id="A32006">
    <property type="entry name" value="DEECNA"/>
</dbReference>
<dbReference type="RefSeq" id="NP_416744.1">
    <property type="nucleotide sequence ID" value="NC_000913.3"/>
</dbReference>
<dbReference type="RefSeq" id="WP_000857257.1">
    <property type="nucleotide sequence ID" value="NZ_LN832404.1"/>
</dbReference>
<dbReference type="SMR" id="P0A9C0"/>
<dbReference type="BioGRID" id="4259614">
    <property type="interactions" value="352"/>
</dbReference>
<dbReference type="ComplexPortal" id="CPX-4841">
    <property type="entry name" value="Anaerobic glycerol-3-phosphate dehydrogenase complex"/>
</dbReference>
<dbReference type="FunCoup" id="P0A9C0">
    <property type="interactions" value="50"/>
</dbReference>
<dbReference type="IntAct" id="P0A9C0">
    <property type="interactions" value="4"/>
</dbReference>
<dbReference type="STRING" id="511145.b2241"/>
<dbReference type="jPOST" id="P0A9C0"/>
<dbReference type="PaxDb" id="511145-b2241"/>
<dbReference type="EnsemblBacteria" id="AAC75301">
    <property type="protein sequence ID" value="AAC75301"/>
    <property type="gene ID" value="b2241"/>
</dbReference>
<dbReference type="GeneID" id="93774933"/>
<dbReference type="GeneID" id="946713"/>
<dbReference type="KEGG" id="ecj:JW2235"/>
<dbReference type="KEGG" id="eco:b2241"/>
<dbReference type="KEGG" id="ecoc:C3026_12520"/>
<dbReference type="PATRIC" id="fig|1411691.4.peg.4498"/>
<dbReference type="EchoBASE" id="EB0386"/>
<dbReference type="eggNOG" id="COG0578">
    <property type="taxonomic scope" value="Bacteria"/>
</dbReference>
<dbReference type="HOGENOM" id="CLU_015740_0_1_6"/>
<dbReference type="InParanoid" id="P0A9C0"/>
<dbReference type="OMA" id="GVMTIMN"/>
<dbReference type="OrthoDB" id="9801699at2"/>
<dbReference type="PhylomeDB" id="P0A9C0"/>
<dbReference type="BioCyc" id="EcoCyc:ANGLYC3PDEHYDROGSUBUNITA-MONOMER"/>
<dbReference type="BioCyc" id="MetaCyc:ANGLYC3PDEHYDROGSUBUNITA-MONOMER"/>
<dbReference type="UniPathway" id="UPA00618">
    <property type="reaction ID" value="UER00673"/>
</dbReference>
<dbReference type="PRO" id="PR:P0A9C0"/>
<dbReference type="Proteomes" id="UP000000625">
    <property type="component" value="Chromosome"/>
</dbReference>
<dbReference type="GO" id="GO:0005829">
    <property type="term" value="C:cytosol"/>
    <property type="evidence" value="ECO:0000314"/>
    <property type="project" value="EcoCyc"/>
</dbReference>
<dbReference type="GO" id="GO:0009331">
    <property type="term" value="C:glycerol-3-phosphate dehydrogenase (FAD) complex"/>
    <property type="evidence" value="ECO:0000303"/>
    <property type="project" value="ComplexPortal"/>
</dbReference>
<dbReference type="GO" id="GO:0005886">
    <property type="term" value="C:plasma membrane"/>
    <property type="evidence" value="ECO:0007669"/>
    <property type="project" value="UniProtKB-SubCell"/>
</dbReference>
<dbReference type="GO" id="GO:0050660">
    <property type="term" value="F:flavin adenine dinucleotide binding"/>
    <property type="evidence" value="ECO:0000314"/>
    <property type="project" value="EcoCyc"/>
</dbReference>
<dbReference type="GO" id="GO:0010181">
    <property type="term" value="F:FMN binding"/>
    <property type="evidence" value="ECO:0007669"/>
    <property type="project" value="InterPro"/>
</dbReference>
<dbReference type="GO" id="GO:0004368">
    <property type="term" value="F:glycerol-3-phosphate dehydrogenase (quinone) activity"/>
    <property type="evidence" value="ECO:0000314"/>
    <property type="project" value="EcoCyc"/>
</dbReference>
<dbReference type="GO" id="GO:0009061">
    <property type="term" value="P:anaerobic respiration"/>
    <property type="evidence" value="ECO:0000270"/>
    <property type="project" value="EcoCyc"/>
</dbReference>
<dbReference type="GO" id="GO:0019563">
    <property type="term" value="P:glycerol catabolic process"/>
    <property type="evidence" value="ECO:0007669"/>
    <property type="project" value="UniProtKB-UniPathway"/>
</dbReference>
<dbReference type="GO" id="GO:0046168">
    <property type="term" value="P:glycerol-3-phosphate catabolic process"/>
    <property type="evidence" value="ECO:0000314"/>
    <property type="project" value="EcoCyc"/>
</dbReference>
<dbReference type="CDD" id="cd19946">
    <property type="entry name" value="GlpA-like_Fer2_BFD-like"/>
    <property type="match status" value="1"/>
</dbReference>
<dbReference type="FunFam" id="1.10.10.1100:FF:000003">
    <property type="entry name" value="Glycerol-3-phosphate dehydrogenase"/>
    <property type="match status" value="1"/>
</dbReference>
<dbReference type="FunFam" id="3.50.50.60:FF:000096">
    <property type="entry name" value="Glycerol-3-phosphate dehydrogenase"/>
    <property type="match status" value="1"/>
</dbReference>
<dbReference type="FunFam" id="3.50.50.60:FF:000102">
    <property type="entry name" value="Glycerol-3-phosphate dehydrogenase"/>
    <property type="match status" value="1"/>
</dbReference>
<dbReference type="FunFam" id="3.50.50.60:FF:000106">
    <property type="entry name" value="Glycerol-3-phosphate dehydrogenase"/>
    <property type="match status" value="1"/>
</dbReference>
<dbReference type="Gene3D" id="1.10.10.1100">
    <property type="entry name" value="BFD-like [2Fe-2S]-binding domain"/>
    <property type="match status" value="1"/>
</dbReference>
<dbReference type="Gene3D" id="3.50.50.60">
    <property type="entry name" value="FAD/NAD(P)-binding domain"/>
    <property type="match status" value="3"/>
</dbReference>
<dbReference type="InterPro" id="IPR007419">
    <property type="entry name" value="BFD-like_2Fe2S-bd_dom"/>
</dbReference>
<dbReference type="InterPro" id="IPR041854">
    <property type="entry name" value="BFD-like_2Fe2S-bd_dom_sf"/>
</dbReference>
<dbReference type="InterPro" id="IPR006076">
    <property type="entry name" value="FAD-dep_OxRdtase"/>
</dbReference>
<dbReference type="InterPro" id="IPR036188">
    <property type="entry name" value="FAD/NAD-bd_sf"/>
</dbReference>
<dbReference type="InterPro" id="IPR000447">
    <property type="entry name" value="G3P_DH_FAD-dep"/>
</dbReference>
<dbReference type="InterPro" id="IPR017752">
    <property type="entry name" value="G3P_DH_GlpA_su"/>
</dbReference>
<dbReference type="NCBIfam" id="TIGR03377">
    <property type="entry name" value="glycerol3P_GlpA"/>
    <property type="match status" value="1"/>
</dbReference>
<dbReference type="NCBIfam" id="NF008313">
    <property type="entry name" value="PRK11101.1"/>
    <property type="match status" value="1"/>
</dbReference>
<dbReference type="PANTHER" id="PTHR11985:SF35">
    <property type="entry name" value="ANAEROBIC GLYCEROL-3-PHOSPHATE DEHYDROGENASE SUBUNIT A"/>
    <property type="match status" value="1"/>
</dbReference>
<dbReference type="PANTHER" id="PTHR11985">
    <property type="entry name" value="GLYCEROL-3-PHOSPHATE DEHYDROGENASE"/>
    <property type="match status" value="1"/>
</dbReference>
<dbReference type="Pfam" id="PF01266">
    <property type="entry name" value="DAO"/>
    <property type="match status" value="1"/>
</dbReference>
<dbReference type="Pfam" id="PF04324">
    <property type="entry name" value="Fer2_BFD"/>
    <property type="match status" value="1"/>
</dbReference>
<dbReference type="PRINTS" id="PR01001">
    <property type="entry name" value="FADG3PDH"/>
</dbReference>
<dbReference type="SUPFAM" id="SSF51905">
    <property type="entry name" value="FAD/NAD(P)-binding domain"/>
    <property type="match status" value="1"/>
</dbReference>
<dbReference type="PROSITE" id="PS00977">
    <property type="entry name" value="FAD_G3PDH_1"/>
    <property type="match status" value="1"/>
</dbReference>
<dbReference type="PROSITE" id="PS00978">
    <property type="entry name" value="FAD_G3PDH_2"/>
    <property type="match status" value="1"/>
</dbReference>
<organism>
    <name type="scientific">Escherichia coli (strain K12)</name>
    <dbReference type="NCBI Taxonomy" id="83333"/>
    <lineage>
        <taxon>Bacteria</taxon>
        <taxon>Pseudomonadati</taxon>
        <taxon>Pseudomonadota</taxon>
        <taxon>Gammaproteobacteria</taxon>
        <taxon>Enterobacterales</taxon>
        <taxon>Enterobacteriaceae</taxon>
        <taxon>Escherichia</taxon>
    </lineage>
</organism>
<protein>
    <recommendedName>
        <fullName>Anaerobic glycerol-3-phosphate dehydrogenase subunit A</fullName>
        <shortName>G-3-P dehydrogenase</shortName>
        <ecNumber>1.1.5.3</ecNumber>
    </recommendedName>
</protein>
<reference key="1">
    <citation type="journal article" date="1988" name="J. Bacteriol.">
        <title>Nucleotide sequence and gene-polypeptide relationships of the glpABC operon encoding the anaerobic sn-glycerol-3-phosphate dehydrogenase of Escherichia coli K-12.</title>
        <authorList>
            <person name="Cole S.T."/>
            <person name="Eiglmeier K."/>
            <person name="Ahmed S."/>
            <person name="Honore N."/>
            <person name="Elmes L."/>
            <person name="Anderson W.F."/>
            <person name="Weiner J.H."/>
        </authorList>
    </citation>
    <scope>NUCLEOTIDE SEQUENCE [GENOMIC DNA]</scope>
    <scope>PROTEIN SEQUENCE OF 1-10</scope>
    <source>
        <strain>K12</strain>
    </source>
</reference>
<reference key="2">
    <citation type="journal article" date="1997" name="DNA Res.">
        <title>Construction of a contiguous 874-kb sequence of the Escherichia coli-K12 genome corresponding to 50.0-68.8 min on the linkage map and analysis of its sequence features.</title>
        <authorList>
            <person name="Yamamoto Y."/>
            <person name="Aiba H."/>
            <person name="Baba T."/>
            <person name="Hayashi K."/>
            <person name="Inada T."/>
            <person name="Isono K."/>
            <person name="Itoh T."/>
            <person name="Kimura S."/>
            <person name="Kitagawa M."/>
            <person name="Makino K."/>
            <person name="Miki T."/>
            <person name="Mitsuhashi N."/>
            <person name="Mizobuchi K."/>
            <person name="Mori H."/>
            <person name="Nakade S."/>
            <person name="Nakamura Y."/>
            <person name="Nashimoto H."/>
            <person name="Oshima T."/>
            <person name="Oyama S."/>
            <person name="Saito N."/>
            <person name="Sampei G."/>
            <person name="Satoh Y."/>
            <person name="Sivasundaram S."/>
            <person name="Tagami H."/>
            <person name="Takahashi H."/>
            <person name="Takeda J."/>
            <person name="Takemoto K."/>
            <person name="Uehara K."/>
            <person name="Wada C."/>
            <person name="Yamagata S."/>
            <person name="Horiuchi T."/>
        </authorList>
    </citation>
    <scope>NUCLEOTIDE SEQUENCE [LARGE SCALE GENOMIC DNA]</scope>
    <source>
        <strain>K12 / W3110 / ATCC 27325 / DSM 5911</strain>
    </source>
</reference>
<reference key="3">
    <citation type="journal article" date="1997" name="Science">
        <title>The complete genome sequence of Escherichia coli K-12.</title>
        <authorList>
            <person name="Blattner F.R."/>
            <person name="Plunkett G. III"/>
            <person name="Bloch C.A."/>
            <person name="Perna N.T."/>
            <person name="Burland V."/>
            <person name="Riley M."/>
            <person name="Collado-Vides J."/>
            <person name="Glasner J.D."/>
            <person name="Rode C.K."/>
            <person name="Mayhew G.F."/>
            <person name="Gregor J."/>
            <person name="Davis N.W."/>
            <person name="Kirkpatrick H.A."/>
            <person name="Goeden M.A."/>
            <person name="Rose D.J."/>
            <person name="Mau B."/>
            <person name="Shao Y."/>
        </authorList>
    </citation>
    <scope>NUCLEOTIDE SEQUENCE [LARGE SCALE GENOMIC DNA]</scope>
    <source>
        <strain>K12 / MG1655 / ATCC 47076</strain>
    </source>
</reference>
<reference key="4">
    <citation type="journal article" date="2006" name="Mol. Syst. Biol.">
        <title>Highly accurate genome sequences of Escherichia coli K-12 strains MG1655 and W3110.</title>
        <authorList>
            <person name="Hayashi K."/>
            <person name="Morooka N."/>
            <person name="Yamamoto Y."/>
            <person name="Fujita K."/>
            <person name="Isono K."/>
            <person name="Choi S."/>
            <person name="Ohtsubo E."/>
            <person name="Baba T."/>
            <person name="Wanner B.L."/>
            <person name="Mori H."/>
            <person name="Horiuchi T."/>
        </authorList>
    </citation>
    <scope>NUCLEOTIDE SEQUENCE [LARGE SCALE GENOMIC DNA]</scope>
    <source>
        <strain>K12 / W3110 / ATCC 27325 / DSM 5911</strain>
    </source>
</reference>
<feature type="chain" id="PRO_0000126093" description="Anaerobic glycerol-3-phosphate dehydrogenase subunit A">
    <location>
        <begin position="1"/>
        <end position="542"/>
    </location>
</feature>
<feature type="binding site" evidence="1">
    <location>
        <begin position="10"/>
        <end position="38"/>
    </location>
    <ligand>
        <name>FAD</name>
        <dbReference type="ChEBI" id="CHEBI:57692"/>
    </ligand>
</feature>
<feature type="sequence conflict" description="In Ref. 1; AAA83864." evidence="2" ref="1">
    <original>V</original>
    <variation>L</variation>
    <location>
        <position position="329"/>
    </location>
</feature>
<evidence type="ECO:0000255" key="1"/>
<evidence type="ECO:0000305" key="2"/>
<name>GLPA_ECOLI</name>
<sequence length="542" mass="58958">MKTRDSQSSDVIIIGGGATGAGIARDCALRGLRVILVERHDIATGATGRNHGLLHSGARYAVTDAESARECISENQILKRIARHCVEPTNGLFITLPEDDLSFQATFIRACEEAGISAEAIDPQQARIIEPAVNPALIGAVKVPDGTVDPFRLTAANMLDAKEHGAVILTAHEVTGLIREGATVCGVRVRNHLTGETQALHAPVVVNAAGIWGQHIAEYADLRIRMFPAKGSLLIMDHRINQHVINRCRKPSDADILVPGDTISLIGTTSLRIDYNEIDDNRVTAEEVDILLREGEKLAPVMAKTRILRAYSGVRPLVASDDDPSGRNVSRGIVLLDHAERDGLDGFITITGGKLMTYRLMAEWATDAVCRKLGNTRPCTTADLALPGSQEPAEVTLRKVISLPAPLRGSAVYRHGDRTPAWLSEGRLHRSLVCECEAVTAGEVQYAVENLNVNSLLDLRRRTRVGMGTCQGELCACRAAGLLQRFNVTTSAQSIEQLSTFLNERWKGVQPIAWGDALRESEFTRWVYQGLCGLEKEQKDAL</sequence>
<keyword id="KW-0997">Cell inner membrane</keyword>
<keyword id="KW-1003">Cell membrane</keyword>
<keyword id="KW-0903">Direct protein sequencing</keyword>
<keyword id="KW-0274">FAD</keyword>
<keyword id="KW-0285">Flavoprotein</keyword>
<keyword id="KW-0472">Membrane</keyword>
<keyword id="KW-0560">Oxidoreductase</keyword>
<keyword id="KW-1185">Reference proteome</keyword>
<comment type="function">
    <text>Conversion of glycerol 3-phosphate to dihydroxyacetone. Uses fumarate or nitrate as electron acceptor.</text>
</comment>
<comment type="catalytic activity">
    <reaction>
        <text>a quinone + sn-glycerol 3-phosphate = dihydroxyacetone phosphate + a quinol</text>
        <dbReference type="Rhea" id="RHEA:18977"/>
        <dbReference type="ChEBI" id="CHEBI:24646"/>
        <dbReference type="ChEBI" id="CHEBI:57597"/>
        <dbReference type="ChEBI" id="CHEBI:57642"/>
        <dbReference type="ChEBI" id="CHEBI:132124"/>
        <dbReference type="EC" id="1.1.5.3"/>
    </reaction>
</comment>
<comment type="cofactor">
    <cofactor>
        <name>FAD</name>
        <dbReference type="ChEBI" id="CHEBI:57692"/>
    </cofactor>
</comment>
<comment type="cofactor">
    <cofactor>
        <name>FMN</name>
        <dbReference type="ChEBI" id="CHEBI:58210"/>
    </cofactor>
</comment>
<comment type="pathway">
    <text>Polyol metabolism; glycerol degradation via glycerol kinase pathway; glycerone phosphate from sn-glycerol 3-phosphate (anaerobic route): step 1/1.</text>
</comment>
<comment type="subunit">
    <text>Composed of a catalytic GlpA/B dimer and of membrane bound GlpC.</text>
</comment>
<comment type="subcellular location">
    <subcellularLocation>
        <location>Cell inner membrane</location>
        <topology>Peripheral membrane protein</topology>
    </subcellularLocation>
    <text>Loosely bound to the cytoplasmic membrane often occurring in vesicles associated with fumarate reductase.</text>
</comment>
<comment type="similarity">
    <text evidence="2">Belongs to the FAD-dependent glycerol-3-phosphate dehydrogenase family.</text>
</comment>
<proteinExistence type="evidence at protein level"/>
<accession>P0A9C0</accession>
<accession>P13032</accession>
<accession>P78238</accession>
<gene>
    <name type="primary">glpA</name>
    <name type="ordered locus">b2241</name>
    <name type="ordered locus">JW2235</name>
</gene>